<name>Y1839_PSEAE</name>
<dbReference type="EC" id="2.1.1.-"/>
<dbReference type="EMBL" id="AE004091">
    <property type="protein sequence ID" value="AAG05228.1"/>
    <property type="molecule type" value="Genomic_DNA"/>
</dbReference>
<dbReference type="PIR" id="A83415">
    <property type="entry name" value="A83415"/>
</dbReference>
<dbReference type="RefSeq" id="NP_250530.1">
    <property type="nucleotide sequence ID" value="NC_002516.2"/>
</dbReference>
<dbReference type="RefSeq" id="WP_003088017.1">
    <property type="nucleotide sequence ID" value="NZ_QZGE01000003.1"/>
</dbReference>
<dbReference type="SMR" id="Q9I2Q6"/>
<dbReference type="STRING" id="208964.PA1839"/>
<dbReference type="PaxDb" id="208964-PA1839"/>
<dbReference type="GeneID" id="880671"/>
<dbReference type="KEGG" id="pae:PA1839"/>
<dbReference type="PATRIC" id="fig|208964.12.peg.1912"/>
<dbReference type="PseudoCAP" id="PA1839"/>
<dbReference type="HOGENOM" id="CLU_029101_3_3_6"/>
<dbReference type="InParanoid" id="Q9I2Q6"/>
<dbReference type="OrthoDB" id="9793973at2"/>
<dbReference type="PhylomeDB" id="Q9I2Q6"/>
<dbReference type="BioCyc" id="PAER208964:G1FZ6-1878-MONOMER"/>
<dbReference type="Proteomes" id="UP000002438">
    <property type="component" value="Chromosome"/>
</dbReference>
<dbReference type="GO" id="GO:0005737">
    <property type="term" value="C:cytoplasm"/>
    <property type="evidence" value="ECO:0007669"/>
    <property type="project" value="UniProtKB-SubCell"/>
</dbReference>
<dbReference type="GO" id="GO:0051539">
    <property type="term" value="F:4 iron, 4 sulfur cluster binding"/>
    <property type="evidence" value="ECO:0007669"/>
    <property type="project" value="UniProtKB-KW"/>
</dbReference>
<dbReference type="GO" id="GO:0046872">
    <property type="term" value="F:metal ion binding"/>
    <property type="evidence" value="ECO:0007669"/>
    <property type="project" value="UniProtKB-KW"/>
</dbReference>
<dbReference type="GO" id="GO:0008173">
    <property type="term" value="F:RNA methyltransferase activity"/>
    <property type="evidence" value="ECO:0007669"/>
    <property type="project" value="InterPro"/>
</dbReference>
<dbReference type="GO" id="GO:0070475">
    <property type="term" value="P:rRNA base methylation"/>
    <property type="evidence" value="ECO:0000318"/>
    <property type="project" value="GO_Central"/>
</dbReference>
<dbReference type="GO" id="GO:0030488">
    <property type="term" value="P:tRNA methylation"/>
    <property type="evidence" value="ECO:0000318"/>
    <property type="project" value="GO_Central"/>
</dbReference>
<dbReference type="CDD" id="cd01335">
    <property type="entry name" value="Radical_SAM"/>
    <property type="match status" value="1"/>
</dbReference>
<dbReference type="FunFam" id="3.20.20.70:FF:000315">
    <property type="entry name" value="Probable RNA methyltransferase PA14_40730"/>
    <property type="match status" value="1"/>
</dbReference>
<dbReference type="Gene3D" id="3.20.20.70">
    <property type="entry name" value="Aldolase class I"/>
    <property type="match status" value="1"/>
</dbReference>
<dbReference type="InterPro" id="IPR013785">
    <property type="entry name" value="Aldolase_TIM"/>
</dbReference>
<dbReference type="InterPro" id="IPR040072">
    <property type="entry name" value="Methyltransferase_A"/>
</dbReference>
<dbReference type="InterPro" id="IPR004383">
    <property type="entry name" value="rRNA_lsu_MTrfase_RlmN/Cfr"/>
</dbReference>
<dbReference type="InterPro" id="IPR007197">
    <property type="entry name" value="rSAM"/>
</dbReference>
<dbReference type="NCBIfam" id="NF011034">
    <property type="entry name" value="PRK14464.1"/>
    <property type="match status" value="1"/>
</dbReference>
<dbReference type="PANTHER" id="PTHR30544">
    <property type="entry name" value="23S RRNA METHYLTRANSFERASE"/>
    <property type="match status" value="1"/>
</dbReference>
<dbReference type="PANTHER" id="PTHR30544:SF5">
    <property type="entry name" value="RADICAL SAM CORE DOMAIN-CONTAINING PROTEIN"/>
    <property type="match status" value="1"/>
</dbReference>
<dbReference type="Pfam" id="PF04055">
    <property type="entry name" value="Radical_SAM"/>
    <property type="match status" value="1"/>
</dbReference>
<dbReference type="PIRSF" id="PIRSF006004">
    <property type="entry name" value="CHP00048"/>
    <property type="match status" value="1"/>
</dbReference>
<dbReference type="SFLD" id="SFLDF00275">
    <property type="entry name" value="adenosine_C2_methyltransferase"/>
    <property type="match status" value="1"/>
</dbReference>
<dbReference type="SFLD" id="SFLDG01062">
    <property type="entry name" value="methyltransferase_(Class_A)"/>
    <property type="match status" value="1"/>
</dbReference>
<dbReference type="SUPFAM" id="SSF102114">
    <property type="entry name" value="Radical SAM enzymes"/>
    <property type="match status" value="1"/>
</dbReference>
<dbReference type="PROSITE" id="PS51918">
    <property type="entry name" value="RADICAL_SAM"/>
    <property type="match status" value="1"/>
</dbReference>
<sequence>MRSQDLHQRLADLGAKPLHCGRIVRAWLQGRALDACTARQRAEDFLPLGVRHGLPQVAAELEGIARLHSEHPASDGSSRLLVELADRQMVESVLLPRGGLCVSTQVGCAVGCVFCMTGRSGLLRQVGSLEMVAQVVLARRRRAVKKVVFMGMGEPAHNLDNVLEAIDLLGTDGGIGHKNLVFSTVGDPRVFERLPRQRVKPALALSLHSTRAELRRQLLPKAPPLSPEELVEAGEAYARRVDYPIQYQWTLLEGINDSLEEMDGILRLLKGRFAVMNLIPYNSMDGDAYRRPSGERIVELVRYLHSRGVLTKVRNSAGQDIDGGCGQLRARATQGTAERRIPARQA</sequence>
<gene>
    <name type="ordered locus">PA1839</name>
</gene>
<reference key="1">
    <citation type="journal article" date="2000" name="Nature">
        <title>Complete genome sequence of Pseudomonas aeruginosa PAO1, an opportunistic pathogen.</title>
        <authorList>
            <person name="Stover C.K."/>
            <person name="Pham X.-Q.T."/>
            <person name="Erwin A.L."/>
            <person name="Mizoguchi S.D."/>
            <person name="Warrener P."/>
            <person name="Hickey M.J."/>
            <person name="Brinkman F.S.L."/>
            <person name="Hufnagle W.O."/>
            <person name="Kowalik D.J."/>
            <person name="Lagrou M."/>
            <person name="Garber R.L."/>
            <person name="Goltry L."/>
            <person name="Tolentino E."/>
            <person name="Westbrock-Wadman S."/>
            <person name="Yuan Y."/>
            <person name="Brody L.L."/>
            <person name="Coulter S.N."/>
            <person name="Folger K.R."/>
            <person name="Kas A."/>
            <person name="Larbig K."/>
            <person name="Lim R.M."/>
            <person name="Smith K.A."/>
            <person name="Spencer D.H."/>
            <person name="Wong G.K.-S."/>
            <person name="Wu Z."/>
            <person name="Paulsen I.T."/>
            <person name="Reizer J."/>
            <person name="Saier M.H. Jr."/>
            <person name="Hancock R.E.W."/>
            <person name="Lory S."/>
            <person name="Olson M.V."/>
        </authorList>
    </citation>
    <scope>NUCLEOTIDE SEQUENCE [LARGE SCALE GENOMIC DNA]</scope>
    <source>
        <strain>ATCC 15692 / DSM 22644 / CIP 104116 / JCM 14847 / LMG 12228 / 1C / PRS 101 / PAO1</strain>
    </source>
</reference>
<feature type="chain" id="PRO_0000350330" description="Probable RNA methyltransferase PA1839">
    <location>
        <begin position="1"/>
        <end position="346"/>
    </location>
</feature>
<feature type="domain" description="Radical SAM core" evidence="3">
    <location>
        <begin position="94"/>
        <end position="320"/>
    </location>
</feature>
<feature type="active site" description="Proton acceptor" evidence="2">
    <location>
        <position position="91"/>
    </location>
</feature>
<feature type="active site" description="S-methylcysteine intermediate" evidence="1">
    <location>
        <position position="325"/>
    </location>
</feature>
<feature type="binding site" evidence="1">
    <location>
        <position position="108"/>
    </location>
    <ligand>
        <name>[4Fe-4S] cluster</name>
        <dbReference type="ChEBI" id="CHEBI:49883"/>
        <note>4Fe-4S-S-AdoMet</note>
    </ligand>
</feature>
<feature type="binding site" evidence="1">
    <location>
        <position position="112"/>
    </location>
    <ligand>
        <name>[4Fe-4S] cluster</name>
        <dbReference type="ChEBI" id="CHEBI:49883"/>
        <note>4Fe-4S-S-AdoMet</note>
    </ligand>
</feature>
<feature type="binding site" evidence="1">
    <location>
        <position position="115"/>
    </location>
    <ligand>
        <name>[4Fe-4S] cluster</name>
        <dbReference type="ChEBI" id="CHEBI:49883"/>
        <note>4Fe-4S-S-AdoMet</note>
    </ligand>
</feature>
<feature type="binding site" evidence="1">
    <location>
        <begin position="153"/>
        <end position="154"/>
    </location>
    <ligand>
        <name>S-adenosyl-L-methionine</name>
        <dbReference type="ChEBI" id="CHEBI:59789"/>
    </ligand>
</feature>
<feature type="binding site" evidence="1">
    <location>
        <position position="183"/>
    </location>
    <ligand>
        <name>S-adenosyl-L-methionine</name>
        <dbReference type="ChEBI" id="CHEBI:59789"/>
    </ligand>
</feature>
<feature type="binding site" evidence="1">
    <location>
        <begin position="206"/>
        <end position="208"/>
    </location>
    <ligand>
        <name>S-adenosyl-L-methionine</name>
        <dbReference type="ChEBI" id="CHEBI:59789"/>
    </ligand>
</feature>
<feature type="binding site" evidence="1">
    <location>
        <position position="282"/>
    </location>
    <ligand>
        <name>S-adenosyl-L-methionine</name>
        <dbReference type="ChEBI" id="CHEBI:59789"/>
    </ligand>
</feature>
<feature type="disulfide bond" description="(transient)" evidence="1">
    <location>
        <begin position="101"/>
        <end position="325"/>
    </location>
</feature>
<organism>
    <name type="scientific">Pseudomonas aeruginosa (strain ATCC 15692 / DSM 22644 / CIP 104116 / JCM 14847 / LMG 12228 / 1C / PRS 101 / PAO1)</name>
    <dbReference type="NCBI Taxonomy" id="208964"/>
    <lineage>
        <taxon>Bacteria</taxon>
        <taxon>Pseudomonadati</taxon>
        <taxon>Pseudomonadota</taxon>
        <taxon>Gammaproteobacteria</taxon>
        <taxon>Pseudomonadales</taxon>
        <taxon>Pseudomonadaceae</taxon>
        <taxon>Pseudomonas</taxon>
    </lineage>
</organism>
<proteinExistence type="inferred from homology"/>
<keyword id="KW-0004">4Fe-4S</keyword>
<keyword id="KW-0963">Cytoplasm</keyword>
<keyword id="KW-1015">Disulfide bond</keyword>
<keyword id="KW-0408">Iron</keyword>
<keyword id="KW-0411">Iron-sulfur</keyword>
<keyword id="KW-0479">Metal-binding</keyword>
<keyword id="KW-0489">Methyltransferase</keyword>
<keyword id="KW-1185">Reference proteome</keyword>
<keyword id="KW-0949">S-adenosyl-L-methionine</keyword>
<keyword id="KW-0808">Transferase</keyword>
<comment type="cofactor">
    <cofactor evidence="1">
        <name>[4Fe-4S] cluster</name>
        <dbReference type="ChEBI" id="CHEBI:49883"/>
    </cofactor>
    <text evidence="1">Binds 1 [4Fe-4S] cluster. The cluster is coordinated with 3 cysteines and an exchangeable S-adenosyl-L-methionine.</text>
</comment>
<comment type="subcellular location">
    <subcellularLocation>
        <location evidence="4">Cytoplasm</location>
    </subcellularLocation>
</comment>
<comment type="similarity">
    <text evidence="4">Belongs to the radical SAM superfamily. RlmN family.</text>
</comment>
<accession>Q9I2Q6</accession>
<protein>
    <recommendedName>
        <fullName>Probable RNA methyltransferase PA1839</fullName>
        <ecNumber>2.1.1.-</ecNumber>
    </recommendedName>
</protein>
<evidence type="ECO:0000250" key="1"/>
<evidence type="ECO:0000255" key="2"/>
<evidence type="ECO:0000255" key="3">
    <source>
        <dbReference type="PROSITE-ProRule" id="PRU01266"/>
    </source>
</evidence>
<evidence type="ECO:0000305" key="4"/>